<dbReference type="EMBL" id="CP001389">
    <property type="protein sequence ID" value="ACP24225.1"/>
    <property type="molecule type" value="Genomic_DNA"/>
</dbReference>
<dbReference type="RefSeq" id="WP_012707010.1">
    <property type="nucleotide sequence ID" value="NC_012587.1"/>
</dbReference>
<dbReference type="RefSeq" id="YP_002824978.1">
    <property type="nucleotide sequence ID" value="NC_012587.1"/>
</dbReference>
<dbReference type="SMR" id="C3MGW0"/>
<dbReference type="STRING" id="394.NGR_c04290"/>
<dbReference type="KEGG" id="rhi:NGR_c04290"/>
<dbReference type="PATRIC" id="fig|394.7.peg.3235"/>
<dbReference type="eggNOG" id="COG0323">
    <property type="taxonomic scope" value="Bacteria"/>
</dbReference>
<dbReference type="HOGENOM" id="CLU_004131_4_2_5"/>
<dbReference type="OrthoDB" id="9763467at2"/>
<dbReference type="Proteomes" id="UP000001054">
    <property type="component" value="Chromosome"/>
</dbReference>
<dbReference type="GO" id="GO:0032300">
    <property type="term" value="C:mismatch repair complex"/>
    <property type="evidence" value="ECO:0007669"/>
    <property type="project" value="InterPro"/>
</dbReference>
<dbReference type="GO" id="GO:0005524">
    <property type="term" value="F:ATP binding"/>
    <property type="evidence" value="ECO:0007669"/>
    <property type="project" value="InterPro"/>
</dbReference>
<dbReference type="GO" id="GO:0016887">
    <property type="term" value="F:ATP hydrolysis activity"/>
    <property type="evidence" value="ECO:0007669"/>
    <property type="project" value="InterPro"/>
</dbReference>
<dbReference type="GO" id="GO:0140664">
    <property type="term" value="F:ATP-dependent DNA damage sensor activity"/>
    <property type="evidence" value="ECO:0007669"/>
    <property type="project" value="InterPro"/>
</dbReference>
<dbReference type="GO" id="GO:0030983">
    <property type="term" value="F:mismatched DNA binding"/>
    <property type="evidence" value="ECO:0007669"/>
    <property type="project" value="InterPro"/>
</dbReference>
<dbReference type="GO" id="GO:0006298">
    <property type="term" value="P:mismatch repair"/>
    <property type="evidence" value="ECO:0007669"/>
    <property type="project" value="UniProtKB-UniRule"/>
</dbReference>
<dbReference type="CDD" id="cd16926">
    <property type="entry name" value="HATPase_MutL-MLH-PMS-like"/>
    <property type="match status" value="1"/>
</dbReference>
<dbReference type="CDD" id="cd00782">
    <property type="entry name" value="MutL_Trans"/>
    <property type="match status" value="1"/>
</dbReference>
<dbReference type="FunFam" id="3.30.565.10:FF:000003">
    <property type="entry name" value="DNA mismatch repair endonuclease MutL"/>
    <property type="match status" value="1"/>
</dbReference>
<dbReference type="Gene3D" id="3.30.230.10">
    <property type="match status" value="1"/>
</dbReference>
<dbReference type="Gene3D" id="3.30.565.10">
    <property type="entry name" value="Histidine kinase-like ATPase, C-terminal domain"/>
    <property type="match status" value="1"/>
</dbReference>
<dbReference type="Gene3D" id="3.30.1540.20">
    <property type="entry name" value="MutL, C-terminal domain, dimerisation subdomain"/>
    <property type="match status" value="1"/>
</dbReference>
<dbReference type="Gene3D" id="3.30.1370.100">
    <property type="entry name" value="MutL, C-terminal domain, regulatory subdomain"/>
    <property type="match status" value="1"/>
</dbReference>
<dbReference type="HAMAP" id="MF_00149">
    <property type="entry name" value="DNA_mis_repair"/>
    <property type="match status" value="1"/>
</dbReference>
<dbReference type="InterPro" id="IPR014762">
    <property type="entry name" value="DNA_mismatch_repair_CS"/>
</dbReference>
<dbReference type="InterPro" id="IPR020667">
    <property type="entry name" value="DNA_mismatch_repair_MutL"/>
</dbReference>
<dbReference type="InterPro" id="IPR013507">
    <property type="entry name" value="DNA_mismatch_S5_2-like"/>
</dbReference>
<dbReference type="InterPro" id="IPR036890">
    <property type="entry name" value="HATPase_C_sf"/>
</dbReference>
<dbReference type="InterPro" id="IPR002099">
    <property type="entry name" value="MutL/Mlh/PMS"/>
</dbReference>
<dbReference type="InterPro" id="IPR038973">
    <property type="entry name" value="MutL/Mlh/Pms-like"/>
</dbReference>
<dbReference type="InterPro" id="IPR014790">
    <property type="entry name" value="MutL_C"/>
</dbReference>
<dbReference type="InterPro" id="IPR042120">
    <property type="entry name" value="MutL_C_dimsub"/>
</dbReference>
<dbReference type="InterPro" id="IPR042121">
    <property type="entry name" value="MutL_C_regsub"/>
</dbReference>
<dbReference type="InterPro" id="IPR037198">
    <property type="entry name" value="MutL_C_sf"/>
</dbReference>
<dbReference type="InterPro" id="IPR020568">
    <property type="entry name" value="Ribosomal_Su5_D2-typ_SF"/>
</dbReference>
<dbReference type="InterPro" id="IPR014721">
    <property type="entry name" value="Ribsml_uS5_D2-typ_fold_subgr"/>
</dbReference>
<dbReference type="NCBIfam" id="TIGR00585">
    <property type="entry name" value="mutl"/>
    <property type="match status" value="1"/>
</dbReference>
<dbReference type="NCBIfam" id="NF000953">
    <property type="entry name" value="PRK00095.2-4"/>
    <property type="match status" value="1"/>
</dbReference>
<dbReference type="PANTHER" id="PTHR10073">
    <property type="entry name" value="DNA MISMATCH REPAIR PROTEIN MLH, PMS, MUTL"/>
    <property type="match status" value="1"/>
</dbReference>
<dbReference type="PANTHER" id="PTHR10073:SF12">
    <property type="entry name" value="DNA MISMATCH REPAIR PROTEIN MLH1"/>
    <property type="match status" value="1"/>
</dbReference>
<dbReference type="Pfam" id="PF01119">
    <property type="entry name" value="DNA_mis_repair"/>
    <property type="match status" value="1"/>
</dbReference>
<dbReference type="Pfam" id="PF13589">
    <property type="entry name" value="HATPase_c_3"/>
    <property type="match status" value="1"/>
</dbReference>
<dbReference type="Pfam" id="PF08676">
    <property type="entry name" value="MutL_C"/>
    <property type="match status" value="1"/>
</dbReference>
<dbReference type="SMART" id="SM01340">
    <property type="entry name" value="DNA_mis_repair"/>
    <property type="match status" value="1"/>
</dbReference>
<dbReference type="SMART" id="SM00853">
    <property type="entry name" value="MutL_C"/>
    <property type="match status" value="1"/>
</dbReference>
<dbReference type="SUPFAM" id="SSF55874">
    <property type="entry name" value="ATPase domain of HSP90 chaperone/DNA topoisomerase II/histidine kinase"/>
    <property type="match status" value="1"/>
</dbReference>
<dbReference type="SUPFAM" id="SSF118116">
    <property type="entry name" value="DNA mismatch repair protein MutL"/>
    <property type="match status" value="1"/>
</dbReference>
<dbReference type="SUPFAM" id="SSF54211">
    <property type="entry name" value="Ribosomal protein S5 domain 2-like"/>
    <property type="match status" value="1"/>
</dbReference>
<dbReference type="PROSITE" id="PS00058">
    <property type="entry name" value="DNA_MISMATCH_REPAIR_1"/>
    <property type="match status" value="1"/>
</dbReference>
<reference key="1">
    <citation type="journal article" date="2009" name="Appl. Environ. Microbiol.">
        <title>Rhizobium sp. strain NGR234 possesses a remarkable number of secretion systems.</title>
        <authorList>
            <person name="Schmeisser C."/>
            <person name="Liesegang H."/>
            <person name="Krysciak D."/>
            <person name="Bakkou N."/>
            <person name="Le Quere A."/>
            <person name="Wollherr A."/>
            <person name="Heinemeyer I."/>
            <person name="Morgenstern B."/>
            <person name="Pommerening-Roeser A."/>
            <person name="Flores M."/>
            <person name="Palacios R."/>
            <person name="Brenner S."/>
            <person name="Gottschalk G."/>
            <person name="Schmitz R.A."/>
            <person name="Broughton W.J."/>
            <person name="Perret X."/>
            <person name="Strittmatter A.W."/>
            <person name="Streit W.R."/>
        </authorList>
    </citation>
    <scope>NUCLEOTIDE SEQUENCE [LARGE SCALE GENOMIC DNA]</scope>
    <source>
        <strain>NBRC 101917 / NGR234</strain>
    </source>
</reference>
<sequence>MAIKQLSETLINQIAAGEVIERPASAAKELIENALDAGATRIEVATAGGGKTLLRVTDNGNGMSPADLELAIRRHCTSKIDDTLTDIRTLGFRGEALPSIGSVARLSITTRTAGAREGAAISVIGGKTESVRPSPANVGTVVEVRDLFFATPARLKFMKTEKAEAAAISEVVRRMAIAFPKVRFVVSGSDRSTLEFPATGDDRLARMAQVLGKDFRDNAIGIDAEREEARLSGFAGVPTFNRGNSLQQYAFVNGRPVQDKLILSAIRAAYAETIPQGRYPVAVLSIALDPALVDVNVHPAKSDVRFRDPGLIRGLIIGAIREALSRGGDRAATTGAQGMMRSFRPEAYRAEPHRAQAPWTAATSPYRPMRFDEPARGFAEAPQAAFQEFAQPAARPAETAPNGTVEPAFPLGAARAQLHENYIVAQTEEGLVIVDQHAAHERLVFEAMRTALHSRPVPAQALLIPEIVDLAEDDCDRLMAHAEEFLRLGLSIERFGPGAIAVRETPAMLGEMDASGLVRQLADELAEWDTANGLAGRLDYLAATMACHGSVRSGRRMRPEEMNALLRQMEATPGSGQCNHGRPTYIELKLADIERLFGRS</sequence>
<feature type="chain" id="PRO_1000123213" description="DNA mismatch repair protein MutL">
    <location>
        <begin position="1"/>
        <end position="600"/>
    </location>
</feature>
<gene>
    <name evidence="1" type="primary">mutL</name>
    <name type="ordered locus">NGR_c04290</name>
</gene>
<organism>
    <name type="scientific">Sinorhizobium fredii (strain NBRC 101917 / NGR234)</name>
    <dbReference type="NCBI Taxonomy" id="394"/>
    <lineage>
        <taxon>Bacteria</taxon>
        <taxon>Pseudomonadati</taxon>
        <taxon>Pseudomonadota</taxon>
        <taxon>Alphaproteobacteria</taxon>
        <taxon>Hyphomicrobiales</taxon>
        <taxon>Rhizobiaceae</taxon>
        <taxon>Sinorhizobium/Ensifer group</taxon>
        <taxon>Sinorhizobium</taxon>
    </lineage>
</organism>
<accession>C3MGW0</accession>
<protein>
    <recommendedName>
        <fullName evidence="1">DNA mismatch repair protein MutL</fullName>
    </recommendedName>
</protein>
<keyword id="KW-0227">DNA damage</keyword>
<keyword id="KW-0234">DNA repair</keyword>
<keyword id="KW-1185">Reference proteome</keyword>
<evidence type="ECO:0000255" key="1">
    <source>
        <dbReference type="HAMAP-Rule" id="MF_00149"/>
    </source>
</evidence>
<name>MUTL_SINFN</name>
<proteinExistence type="inferred from homology"/>
<comment type="function">
    <text evidence="1">This protein is involved in the repair of mismatches in DNA. It is required for dam-dependent methyl-directed DNA mismatch repair. May act as a 'molecular matchmaker', a protein that promotes the formation of a stable complex between two or more DNA-binding proteins in an ATP-dependent manner without itself being part of a final effector complex.</text>
</comment>
<comment type="similarity">
    <text evidence="1">Belongs to the DNA mismatch repair MutL/HexB family.</text>
</comment>